<comment type="similarity">
    <text evidence="1">Belongs to the SlyX family.</text>
</comment>
<feature type="chain" id="PRO_0000227088" description="Protein SlyX homolog">
    <location>
        <begin position="1"/>
        <end position="78"/>
    </location>
</feature>
<evidence type="ECO:0000255" key="1">
    <source>
        <dbReference type="HAMAP-Rule" id="MF_00715"/>
    </source>
</evidence>
<accession>Q3BV87</accession>
<reference key="1">
    <citation type="journal article" date="2005" name="J. Bacteriol.">
        <title>Insights into genome plasticity and pathogenicity of the plant pathogenic Bacterium Xanthomonas campestris pv. vesicatoria revealed by the complete genome sequence.</title>
        <authorList>
            <person name="Thieme F."/>
            <person name="Koebnik R."/>
            <person name="Bekel T."/>
            <person name="Berger C."/>
            <person name="Boch J."/>
            <person name="Buettner D."/>
            <person name="Caldana C."/>
            <person name="Gaigalat L."/>
            <person name="Goesmann A."/>
            <person name="Kay S."/>
            <person name="Kirchner O."/>
            <person name="Lanz C."/>
            <person name="Linke B."/>
            <person name="McHardy A.C."/>
            <person name="Meyer F."/>
            <person name="Mittenhuber G."/>
            <person name="Nies D.H."/>
            <person name="Niesbach-Kloesgen U."/>
            <person name="Patschkowski T."/>
            <person name="Rueckert C."/>
            <person name="Rupp O."/>
            <person name="Schneiker S."/>
            <person name="Schuster S.C."/>
            <person name="Vorhoelter F.J."/>
            <person name="Weber E."/>
            <person name="Puehler A."/>
            <person name="Bonas U."/>
            <person name="Bartels D."/>
            <person name="Kaiser O."/>
        </authorList>
    </citation>
    <scope>NUCLEOTIDE SEQUENCE [LARGE SCALE GENOMIC DNA]</scope>
    <source>
        <strain>85-10</strain>
    </source>
</reference>
<gene>
    <name evidence="1" type="primary">slyX</name>
    <name type="ordered locus">XCV1595</name>
</gene>
<name>SLYX_XANE5</name>
<dbReference type="EMBL" id="AM039952">
    <property type="protein sequence ID" value="CAJ23243.1"/>
    <property type="molecule type" value="Genomic_DNA"/>
</dbReference>
<dbReference type="RefSeq" id="WP_008576524.1">
    <property type="nucleotide sequence ID" value="NZ_CP017190.1"/>
</dbReference>
<dbReference type="SMR" id="Q3BV87"/>
<dbReference type="STRING" id="456327.BJD11_14645"/>
<dbReference type="KEGG" id="xcv:XCV1595"/>
<dbReference type="eggNOG" id="COG2900">
    <property type="taxonomic scope" value="Bacteria"/>
</dbReference>
<dbReference type="HOGENOM" id="CLU_180796_4_2_6"/>
<dbReference type="Proteomes" id="UP000007069">
    <property type="component" value="Chromosome"/>
</dbReference>
<dbReference type="Gene3D" id="1.20.5.300">
    <property type="match status" value="1"/>
</dbReference>
<dbReference type="HAMAP" id="MF_00715">
    <property type="entry name" value="SlyX"/>
    <property type="match status" value="1"/>
</dbReference>
<dbReference type="InterPro" id="IPR007236">
    <property type="entry name" value="SlyX"/>
</dbReference>
<dbReference type="NCBIfam" id="NF002024">
    <property type="entry name" value="PRK00846.1"/>
    <property type="match status" value="1"/>
</dbReference>
<dbReference type="PANTHER" id="PTHR36508">
    <property type="entry name" value="PROTEIN SLYX"/>
    <property type="match status" value="1"/>
</dbReference>
<dbReference type="PANTHER" id="PTHR36508:SF1">
    <property type="entry name" value="PROTEIN SLYX"/>
    <property type="match status" value="1"/>
</dbReference>
<dbReference type="Pfam" id="PF04102">
    <property type="entry name" value="SlyX"/>
    <property type="match status" value="1"/>
</dbReference>
<proteinExistence type="inferred from homology"/>
<organism>
    <name type="scientific">Xanthomonas euvesicatoria pv. vesicatoria (strain 85-10)</name>
    <name type="common">Xanthomonas campestris pv. vesicatoria</name>
    <dbReference type="NCBI Taxonomy" id="316273"/>
    <lineage>
        <taxon>Bacteria</taxon>
        <taxon>Pseudomonadati</taxon>
        <taxon>Pseudomonadota</taxon>
        <taxon>Gammaproteobacteria</taxon>
        <taxon>Lysobacterales</taxon>
        <taxon>Lysobacteraceae</taxon>
        <taxon>Xanthomonas</taxon>
    </lineage>
</organism>
<sequence>MHEQLPLHDRALEARLIELETRLSFQEQALNELSEALADARLTGARNAELIRHLLEDLGKVRSTLFADAADEPPPPHY</sequence>
<protein>
    <recommendedName>
        <fullName evidence="1">Protein SlyX homolog</fullName>
    </recommendedName>
</protein>